<accession>Q11KJ5</accession>
<name>DNAJ_CHESB</name>
<organism>
    <name type="scientific">Chelativorans sp. (strain BNC1)</name>
    <dbReference type="NCBI Taxonomy" id="266779"/>
    <lineage>
        <taxon>Bacteria</taxon>
        <taxon>Pseudomonadati</taxon>
        <taxon>Pseudomonadota</taxon>
        <taxon>Alphaproteobacteria</taxon>
        <taxon>Hyphomicrobiales</taxon>
        <taxon>Phyllobacteriaceae</taxon>
        <taxon>Chelativorans</taxon>
    </lineage>
</organism>
<evidence type="ECO:0000255" key="1">
    <source>
        <dbReference type="HAMAP-Rule" id="MF_01152"/>
    </source>
</evidence>
<gene>
    <name evidence="1" type="primary">dnaJ</name>
    <name type="ordered locus">Meso_0680</name>
</gene>
<dbReference type="EMBL" id="CP000390">
    <property type="protein sequence ID" value="ABG62080.1"/>
    <property type="molecule type" value="Genomic_DNA"/>
</dbReference>
<dbReference type="SMR" id="Q11KJ5"/>
<dbReference type="STRING" id="266779.Meso_0680"/>
<dbReference type="KEGG" id="mes:Meso_0680"/>
<dbReference type="eggNOG" id="COG0484">
    <property type="taxonomic scope" value="Bacteria"/>
</dbReference>
<dbReference type="HOGENOM" id="CLU_017633_0_7_5"/>
<dbReference type="OrthoDB" id="9779889at2"/>
<dbReference type="GO" id="GO:0005737">
    <property type="term" value="C:cytoplasm"/>
    <property type="evidence" value="ECO:0007669"/>
    <property type="project" value="UniProtKB-SubCell"/>
</dbReference>
<dbReference type="GO" id="GO:0005524">
    <property type="term" value="F:ATP binding"/>
    <property type="evidence" value="ECO:0007669"/>
    <property type="project" value="InterPro"/>
</dbReference>
<dbReference type="GO" id="GO:0031072">
    <property type="term" value="F:heat shock protein binding"/>
    <property type="evidence" value="ECO:0007669"/>
    <property type="project" value="InterPro"/>
</dbReference>
<dbReference type="GO" id="GO:0051082">
    <property type="term" value="F:unfolded protein binding"/>
    <property type="evidence" value="ECO:0007669"/>
    <property type="project" value="UniProtKB-UniRule"/>
</dbReference>
<dbReference type="GO" id="GO:0008270">
    <property type="term" value="F:zinc ion binding"/>
    <property type="evidence" value="ECO:0007669"/>
    <property type="project" value="UniProtKB-UniRule"/>
</dbReference>
<dbReference type="GO" id="GO:0051085">
    <property type="term" value="P:chaperone cofactor-dependent protein refolding"/>
    <property type="evidence" value="ECO:0007669"/>
    <property type="project" value="TreeGrafter"/>
</dbReference>
<dbReference type="GO" id="GO:0006260">
    <property type="term" value="P:DNA replication"/>
    <property type="evidence" value="ECO:0007669"/>
    <property type="project" value="UniProtKB-KW"/>
</dbReference>
<dbReference type="GO" id="GO:0042026">
    <property type="term" value="P:protein refolding"/>
    <property type="evidence" value="ECO:0007669"/>
    <property type="project" value="TreeGrafter"/>
</dbReference>
<dbReference type="GO" id="GO:0009408">
    <property type="term" value="P:response to heat"/>
    <property type="evidence" value="ECO:0007669"/>
    <property type="project" value="InterPro"/>
</dbReference>
<dbReference type="CDD" id="cd06257">
    <property type="entry name" value="DnaJ"/>
    <property type="match status" value="1"/>
</dbReference>
<dbReference type="CDD" id="cd10747">
    <property type="entry name" value="DnaJ_C"/>
    <property type="match status" value="1"/>
</dbReference>
<dbReference type="CDD" id="cd10719">
    <property type="entry name" value="DnaJ_zf"/>
    <property type="match status" value="1"/>
</dbReference>
<dbReference type="FunFam" id="1.10.287.110:FF:000034">
    <property type="entry name" value="Chaperone protein DnaJ"/>
    <property type="match status" value="1"/>
</dbReference>
<dbReference type="FunFam" id="2.10.230.10:FF:000002">
    <property type="entry name" value="Molecular chaperone DnaJ"/>
    <property type="match status" value="1"/>
</dbReference>
<dbReference type="FunFam" id="2.60.260.20:FF:000004">
    <property type="entry name" value="Molecular chaperone DnaJ"/>
    <property type="match status" value="1"/>
</dbReference>
<dbReference type="Gene3D" id="1.10.287.110">
    <property type="entry name" value="DnaJ domain"/>
    <property type="match status" value="1"/>
</dbReference>
<dbReference type="Gene3D" id="2.10.230.10">
    <property type="entry name" value="Heat shock protein DnaJ, cysteine-rich domain"/>
    <property type="match status" value="1"/>
</dbReference>
<dbReference type="Gene3D" id="2.60.260.20">
    <property type="entry name" value="Urease metallochaperone UreE, N-terminal domain"/>
    <property type="match status" value="2"/>
</dbReference>
<dbReference type="HAMAP" id="MF_01152">
    <property type="entry name" value="DnaJ"/>
    <property type="match status" value="1"/>
</dbReference>
<dbReference type="InterPro" id="IPR012724">
    <property type="entry name" value="DnaJ"/>
</dbReference>
<dbReference type="InterPro" id="IPR002939">
    <property type="entry name" value="DnaJ_C"/>
</dbReference>
<dbReference type="InterPro" id="IPR001623">
    <property type="entry name" value="DnaJ_domain"/>
</dbReference>
<dbReference type="InterPro" id="IPR018253">
    <property type="entry name" value="DnaJ_domain_CS"/>
</dbReference>
<dbReference type="InterPro" id="IPR008971">
    <property type="entry name" value="HSP40/DnaJ_pept-bd"/>
</dbReference>
<dbReference type="InterPro" id="IPR001305">
    <property type="entry name" value="HSP_DnaJ_Cys-rich_dom"/>
</dbReference>
<dbReference type="InterPro" id="IPR036410">
    <property type="entry name" value="HSP_DnaJ_Cys-rich_dom_sf"/>
</dbReference>
<dbReference type="InterPro" id="IPR036869">
    <property type="entry name" value="J_dom_sf"/>
</dbReference>
<dbReference type="NCBIfam" id="TIGR02349">
    <property type="entry name" value="DnaJ_bact"/>
    <property type="match status" value="1"/>
</dbReference>
<dbReference type="NCBIfam" id="NF008035">
    <property type="entry name" value="PRK10767.1"/>
    <property type="match status" value="1"/>
</dbReference>
<dbReference type="PANTHER" id="PTHR43096:SF48">
    <property type="entry name" value="CHAPERONE PROTEIN DNAJ"/>
    <property type="match status" value="1"/>
</dbReference>
<dbReference type="PANTHER" id="PTHR43096">
    <property type="entry name" value="DNAJ HOMOLOG 1, MITOCHONDRIAL-RELATED"/>
    <property type="match status" value="1"/>
</dbReference>
<dbReference type="Pfam" id="PF00226">
    <property type="entry name" value="DnaJ"/>
    <property type="match status" value="1"/>
</dbReference>
<dbReference type="Pfam" id="PF01556">
    <property type="entry name" value="DnaJ_C"/>
    <property type="match status" value="1"/>
</dbReference>
<dbReference type="Pfam" id="PF00684">
    <property type="entry name" value="DnaJ_CXXCXGXG"/>
    <property type="match status" value="1"/>
</dbReference>
<dbReference type="PRINTS" id="PR00625">
    <property type="entry name" value="JDOMAIN"/>
</dbReference>
<dbReference type="SMART" id="SM00271">
    <property type="entry name" value="DnaJ"/>
    <property type="match status" value="1"/>
</dbReference>
<dbReference type="SUPFAM" id="SSF46565">
    <property type="entry name" value="Chaperone J-domain"/>
    <property type="match status" value="1"/>
</dbReference>
<dbReference type="SUPFAM" id="SSF57938">
    <property type="entry name" value="DnaJ/Hsp40 cysteine-rich domain"/>
    <property type="match status" value="1"/>
</dbReference>
<dbReference type="SUPFAM" id="SSF49493">
    <property type="entry name" value="HSP40/DnaJ peptide-binding domain"/>
    <property type="match status" value="2"/>
</dbReference>
<dbReference type="PROSITE" id="PS00636">
    <property type="entry name" value="DNAJ_1"/>
    <property type="match status" value="1"/>
</dbReference>
<dbReference type="PROSITE" id="PS50076">
    <property type="entry name" value="DNAJ_2"/>
    <property type="match status" value="1"/>
</dbReference>
<dbReference type="PROSITE" id="PS51188">
    <property type="entry name" value="ZF_CR"/>
    <property type="match status" value="1"/>
</dbReference>
<reference key="1">
    <citation type="submission" date="2006-06" db="EMBL/GenBank/DDBJ databases">
        <title>Complete sequence of chromosome of Mesorhizobium sp. BNC1.</title>
        <authorList>
            <consortium name="US DOE Joint Genome Institute"/>
            <person name="Copeland A."/>
            <person name="Lucas S."/>
            <person name="Lapidus A."/>
            <person name="Barry K."/>
            <person name="Detter J.C."/>
            <person name="Glavina del Rio T."/>
            <person name="Hammon N."/>
            <person name="Israni S."/>
            <person name="Dalin E."/>
            <person name="Tice H."/>
            <person name="Pitluck S."/>
            <person name="Chertkov O."/>
            <person name="Brettin T."/>
            <person name="Bruce D."/>
            <person name="Han C."/>
            <person name="Tapia R."/>
            <person name="Gilna P."/>
            <person name="Schmutz J."/>
            <person name="Larimer F."/>
            <person name="Land M."/>
            <person name="Hauser L."/>
            <person name="Kyrpides N."/>
            <person name="Mikhailova N."/>
            <person name="Richardson P."/>
        </authorList>
    </citation>
    <scope>NUCLEOTIDE SEQUENCE [LARGE SCALE GENOMIC DNA]</scope>
    <source>
        <strain>BNC1</strain>
    </source>
</reference>
<comment type="function">
    <text evidence="1">Participates actively in the response to hyperosmotic and heat shock by preventing the aggregation of stress-denatured proteins and by disaggregating proteins, also in an autonomous, DnaK-independent fashion. Unfolded proteins bind initially to DnaJ; upon interaction with the DnaJ-bound protein, DnaK hydrolyzes its bound ATP, resulting in the formation of a stable complex. GrpE releases ADP from DnaK; ATP binding to DnaK triggers the release of the substrate protein, thus completing the reaction cycle. Several rounds of ATP-dependent interactions between DnaJ, DnaK and GrpE are required for fully efficient folding. Also involved, together with DnaK and GrpE, in the DNA replication of plasmids through activation of initiation proteins.</text>
</comment>
<comment type="cofactor">
    <cofactor evidence="1">
        <name>Zn(2+)</name>
        <dbReference type="ChEBI" id="CHEBI:29105"/>
    </cofactor>
    <text evidence="1">Binds 2 Zn(2+) ions per monomer.</text>
</comment>
<comment type="subunit">
    <text evidence="1">Homodimer.</text>
</comment>
<comment type="subcellular location">
    <subcellularLocation>
        <location evidence="1">Cytoplasm</location>
    </subcellularLocation>
</comment>
<comment type="domain">
    <text evidence="1">The J domain is necessary and sufficient to stimulate DnaK ATPase activity. Zinc center 1 plays an important role in the autonomous, DnaK-independent chaperone activity of DnaJ. Zinc center 2 is essential for interaction with DnaK and for DnaJ activity.</text>
</comment>
<comment type="similarity">
    <text evidence="1">Belongs to the DnaJ family.</text>
</comment>
<proteinExistence type="inferred from homology"/>
<feature type="chain" id="PRO_1000085226" description="Chaperone protein DnaJ">
    <location>
        <begin position="1"/>
        <end position="374"/>
    </location>
</feature>
<feature type="domain" description="J" evidence="1">
    <location>
        <begin position="4"/>
        <end position="69"/>
    </location>
</feature>
<feature type="repeat" description="CXXCXGXG motif">
    <location>
        <begin position="144"/>
        <end position="151"/>
    </location>
</feature>
<feature type="repeat" description="CXXCXGXG motif">
    <location>
        <begin position="161"/>
        <end position="168"/>
    </location>
</feature>
<feature type="repeat" description="CXXCXGXG motif">
    <location>
        <begin position="184"/>
        <end position="191"/>
    </location>
</feature>
<feature type="repeat" description="CXXCXGXG motif">
    <location>
        <begin position="198"/>
        <end position="205"/>
    </location>
</feature>
<feature type="zinc finger region" description="CR-type" evidence="1">
    <location>
        <begin position="131"/>
        <end position="210"/>
    </location>
</feature>
<feature type="binding site" evidence="1">
    <location>
        <position position="144"/>
    </location>
    <ligand>
        <name>Zn(2+)</name>
        <dbReference type="ChEBI" id="CHEBI:29105"/>
        <label>1</label>
    </ligand>
</feature>
<feature type="binding site" evidence="1">
    <location>
        <position position="147"/>
    </location>
    <ligand>
        <name>Zn(2+)</name>
        <dbReference type="ChEBI" id="CHEBI:29105"/>
        <label>1</label>
    </ligand>
</feature>
<feature type="binding site" evidence="1">
    <location>
        <position position="161"/>
    </location>
    <ligand>
        <name>Zn(2+)</name>
        <dbReference type="ChEBI" id="CHEBI:29105"/>
        <label>2</label>
    </ligand>
</feature>
<feature type="binding site" evidence="1">
    <location>
        <position position="164"/>
    </location>
    <ligand>
        <name>Zn(2+)</name>
        <dbReference type="ChEBI" id="CHEBI:29105"/>
        <label>2</label>
    </ligand>
</feature>
<feature type="binding site" evidence="1">
    <location>
        <position position="184"/>
    </location>
    <ligand>
        <name>Zn(2+)</name>
        <dbReference type="ChEBI" id="CHEBI:29105"/>
        <label>2</label>
    </ligand>
</feature>
<feature type="binding site" evidence="1">
    <location>
        <position position="187"/>
    </location>
    <ligand>
        <name>Zn(2+)</name>
        <dbReference type="ChEBI" id="CHEBI:29105"/>
        <label>2</label>
    </ligand>
</feature>
<feature type="binding site" evidence="1">
    <location>
        <position position="198"/>
    </location>
    <ligand>
        <name>Zn(2+)</name>
        <dbReference type="ChEBI" id="CHEBI:29105"/>
        <label>1</label>
    </ligand>
</feature>
<feature type="binding site" evidence="1">
    <location>
        <position position="201"/>
    </location>
    <ligand>
        <name>Zn(2+)</name>
        <dbReference type="ChEBI" id="CHEBI:29105"/>
        <label>1</label>
    </ligand>
</feature>
<sequence length="374" mass="41197">MKADFYETLCVSRNADEKELKSAFRKLAMQYHPDRNPGDMEAEKKFKEINEAYETLRDPQKRAAYDRFGHAAFEQGMGARGGFNGGGFADIFEDIFGDIMGGARQRRSGGRERGADLRYNMEITLEESFTGKTAQIRVPTAVTCDECAGSGARPGSSPVQCPMCHGAGRVRASTGGFFSIERTCPQCQGRGQIIDDPCRKCSGQGRLTEERSLSVNIPAGIEDGTRIRLAGEGEAGLRGGPPGDLYIFLSIKPHEFFQRDGADLYCKVPISMTTAALGGSFEVTTLDGTQTRVKVPEGTQSGRQFRLRGKGMPVLRQPQVGDLYIQVAVETPQNLTRRQRELLEEFEKISSGENSPQSTGFFARMKDFFETFGE</sequence>
<keyword id="KW-0143">Chaperone</keyword>
<keyword id="KW-0963">Cytoplasm</keyword>
<keyword id="KW-0235">DNA replication</keyword>
<keyword id="KW-0479">Metal-binding</keyword>
<keyword id="KW-0677">Repeat</keyword>
<keyword id="KW-0346">Stress response</keyword>
<keyword id="KW-0862">Zinc</keyword>
<keyword id="KW-0863">Zinc-finger</keyword>
<protein>
    <recommendedName>
        <fullName evidence="1">Chaperone protein DnaJ</fullName>
    </recommendedName>
</protein>